<reference key="1">
    <citation type="journal article" date="1997" name="FEBS Lett.">
        <title>Sense and antisense RNA for the membrane associated 40 kDa subunit M40 of the insect V-ATPase.</title>
        <authorList>
            <person name="Merzendorfer H."/>
            <person name="Harvey W.R."/>
            <person name="Wieczorek H."/>
        </authorList>
    </citation>
    <scope>NUCLEOTIDE SEQUENCE [MRNA]</scope>
</reference>
<proteinExistence type="evidence at transcript level"/>
<protein>
    <recommendedName>
        <fullName>V-type proton ATPase subunit d</fullName>
        <shortName>V-ATPase subunit d</shortName>
    </recommendedName>
    <alternativeName>
        <fullName>M40</fullName>
    </alternativeName>
    <alternativeName>
        <fullName>V-ATPase 40 kDa subunit</fullName>
    </alternativeName>
    <alternativeName>
        <fullName>Vacuolar proton pump subunit d</fullName>
    </alternativeName>
</protein>
<sequence>MKGCIFNIDAGYLEGLCRGFKCGILKQSDYLNLVQCETLEDLKLHLQGTDYGTFLANEPSPLSVSTIDDKLREKLVIEFQHLRNHSVEPLSTFLDFITYSYMIDNIILLITGTLHQRPISELIPKCHPLGSFEQMEAIHVAATPAELYNAVLVDTPLAPFFVDCISEQDLDEMNIEIIRNTLYKAYLEAFYDFCKQIGGTTADVMCEILAFEADRRAIIITINSFGTELSKDDRAKLYPRCGKLNPDGLAALARADDYEQVKAVAEYYAEYSALFEGAGNNVGDKTLEDKFFEHEVNLNVHAFLQQFHFGVFYSYLKLKEQECRNIVWISECVAQKHRAKIDNYIPIF</sequence>
<organism>
    <name type="scientific">Manduca sexta</name>
    <name type="common">Tobacco hawkmoth</name>
    <name type="synonym">Tobacco hornworm</name>
    <dbReference type="NCBI Taxonomy" id="7130"/>
    <lineage>
        <taxon>Eukaryota</taxon>
        <taxon>Metazoa</taxon>
        <taxon>Ecdysozoa</taxon>
        <taxon>Arthropoda</taxon>
        <taxon>Hexapoda</taxon>
        <taxon>Insecta</taxon>
        <taxon>Pterygota</taxon>
        <taxon>Neoptera</taxon>
        <taxon>Endopterygota</taxon>
        <taxon>Lepidoptera</taxon>
        <taxon>Glossata</taxon>
        <taxon>Ditrysia</taxon>
        <taxon>Bombycoidea</taxon>
        <taxon>Sphingidae</taxon>
        <taxon>Sphinginae</taxon>
        <taxon>Sphingini</taxon>
        <taxon>Manduca</taxon>
    </lineage>
</organism>
<comment type="function">
    <text evidence="1 2">Subunit of the V0 complex of vacuolar(H+)-ATPase (V-ATPase), a multisubunit enzyme composed of a peripheral complex (V1) that hydrolyzes ATP and a membrane integral complex (V0) that translocates protons (By similarity). V-ATPase is responsible for acidifying a variety of intracellular compartments in eukaryotic cells, thus providing most of the energy required for transport processes in the vacuolar system (By similarity). May play a role in coupling of proton transport and ATP hydrolysis (By similarity).</text>
</comment>
<comment type="subunit">
    <text evidence="2">V-ATPase is a heteromultimeric enzyme made up of two complexes: the ATP-hydrolytic V1 complex and the proton translocation V0 complex (By similarity). The V1 complex consists of three catalytic AB heterodimers that form a heterohexamer, three peripheral stalks each consisting of EG heterodimers, one central rotor including subunits D and F, and the regulatory subunits C and H (By similarity). The proton translocation complex V0 consists of the proton transport subunit a, a ring of proteolipid subunits c9c'', rotary subunit d, subunits e and f, and the accessory subunits VhaAC45 and ATP6AP2 (By similarity).</text>
</comment>
<comment type="similarity">
    <text evidence="3">Belongs to the V-ATPase V0D/AC39 subunit family.</text>
</comment>
<keyword id="KW-0375">Hydrogen ion transport</keyword>
<keyword id="KW-0406">Ion transport</keyword>
<keyword id="KW-0813">Transport</keyword>
<name>VA0D_MANSE</name>
<dbReference type="EMBL" id="X98825">
    <property type="protein sequence ID" value="CAA67343.1"/>
    <property type="molecule type" value="mRNA"/>
</dbReference>
<dbReference type="SMR" id="Q25531"/>
<dbReference type="DIP" id="DIP-61396N"/>
<dbReference type="IntAct" id="Q25531">
    <property type="interactions" value="1"/>
</dbReference>
<dbReference type="EnsemblMetazoa" id="XM_030177201.2">
    <property type="protein sequence ID" value="XP_030033061.2"/>
    <property type="gene ID" value="LOC115449396"/>
</dbReference>
<dbReference type="OrthoDB" id="10250083at2759"/>
<dbReference type="GO" id="GO:0033179">
    <property type="term" value="C:proton-transporting V-type ATPase, V0 domain"/>
    <property type="evidence" value="ECO:0007669"/>
    <property type="project" value="InterPro"/>
</dbReference>
<dbReference type="GO" id="GO:0046961">
    <property type="term" value="F:proton-transporting ATPase activity, rotational mechanism"/>
    <property type="evidence" value="ECO:0007669"/>
    <property type="project" value="InterPro"/>
</dbReference>
<dbReference type="FunFam" id="1.10.132.50:FF:000002">
    <property type="entry name" value="V-type proton ATPase subunit"/>
    <property type="match status" value="1"/>
</dbReference>
<dbReference type="FunFam" id="1.20.1690.10:FF:000001">
    <property type="entry name" value="V-type proton ATPase subunit"/>
    <property type="match status" value="1"/>
</dbReference>
<dbReference type="FunFam" id="1.20.1690.10:FF:000002">
    <property type="entry name" value="V-type proton ATPase subunit"/>
    <property type="match status" value="1"/>
</dbReference>
<dbReference type="Gene3D" id="1.10.132.50">
    <property type="entry name" value="ATP synthase (C/AC39) subunit, domain 3"/>
    <property type="match status" value="1"/>
</dbReference>
<dbReference type="Gene3D" id="1.20.1690.10">
    <property type="entry name" value="V-type ATP synthase subunit C domain"/>
    <property type="match status" value="2"/>
</dbReference>
<dbReference type="InterPro" id="IPR036079">
    <property type="entry name" value="ATPase_csu/dsu_sf"/>
</dbReference>
<dbReference type="InterPro" id="IPR002843">
    <property type="entry name" value="ATPase_V0-cplx_csu/dsu"/>
</dbReference>
<dbReference type="InterPro" id="IPR016727">
    <property type="entry name" value="ATPase_V0-cplx_dsu"/>
</dbReference>
<dbReference type="InterPro" id="IPR035067">
    <property type="entry name" value="V-type_ATPase_csu/dsu"/>
</dbReference>
<dbReference type="InterPro" id="IPR044911">
    <property type="entry name" value="V-type_ATPase_csu/dsu_dom_3"/>
</dbReference>
<dbReference type="PANTHER" id="PTHR11028">
    <property type="entry name" value="VACUOLAR ATP SYNTHASE SUBUNIT AC39"/>
    <property type="match status" value="1"/>
</dbReference>
<dbReference type="Pfam" id="PF01992">
    <property type="entry name" value="vATP-synt_AC39"/>
    <property type="match status" value="1"/>
</dbReference>
<dbReference type="PIRSF" id="PIRSF018497">
    <property type="entry name" value="V-ATP_synth_D"/>
    <property type="match status" value="1"/>
</dbReference>
<dbReference type="SUPFAM" id="SSF103486">
    <property type="entry name" value="V-type ATP synthase subunit C"/>
    <property type="match status" value="1"/>
</dbReference>
<feature type="chain" id="PRO_0000119355" description="V-type proton ATPase subunit d">
    <location>
        <begin position="1"/>
        <end position="348"/>
    </location>
</feature>
<accession>Q25531</accession>
<evidence type="ECO:0000250" key="1">
    <source>
        <dbReference type="UniProtKB" id="P51863"/>
    </source>
</evidence>
<evidence type="ECO:0000250" key="2">
    <source>
        <dbReference type="UniProtKB" id="P61421"/>
    </source>
</evidence>
<evidence type="ECO:0000305" key="3"/>